<organism>
    <name type="scientific">Sus scrofa</name>
    <name type="common">Pig</name>
    <dbReference type="NCBI Taxonomy" id="9823"/>
    <lineage>
        <taxon>Eukaryota</taxon>
        <taxon>Metazoa</taxon>
        <taxon>Chordata</taxon>
        <taxon>Craniata</taxon>
        <taxon>Vertebrata</taxon>
        <taxon>Euteleostomi</taxon>
        <taxon>Mammalia</taxon>
        <taxon>Eutheria</taxon>
        <taxon>Laurasiatheria</taxon>
        <taxon>Artiodactyla</taxon>
        <taxon>Suina</taxon>
        <taxon>Suidae</taxon>
        <taxon>Sus</taxon>
    </lineage>
</organism>
<dbReference type="EMBL" id="AJ278444">
    <property type="protein sequence ID" value="CAB94728.1"/>
    <property type="molecule type" value="mRNA"/>
</dbReference>
<dbReference type="EMBL" id="DQ629136">
    <property type="protein sequence ID" value="ABK55621.1"/>
    <property type="molecule type" value="mRNA"/>
</dbReference>
<dbReference type="RefSeq" id="NP_999080.2">
    <property type="nucleotide sequence ID" value="NM_213915.2"/>
</dbReference>
<dbReference type="PDB" id="6ZMR">
    <property type="method" value="EM"/>
    <property type="resolution" value="3.94 A"/>
    <property type="chains" value="e=2-71"/>
</dbReference>
<dbReference type="PDB" id="6ZNA">
    <property type="method" value="EM"/>
    <property type="resolution" value="6.20 A"/>
    <property type="chains" value="Ae/Be/Ce/e=2-71"/>
</dbReference>
<dbReference type="PDBsum" id="6ZMR"/>
<dbReference type="PDBsum" id="6ZNA"/>
<dbReference type="SMR" id="Q9MYT8"/>
<dbReference type="FunCoup" id="Q9MYT8">
    <property type="interactions" value="1583"/>
</dbReference>
<dbReference type="STRING" id="9823.ENSSSCP00000022175"/>
<dbReference type="PaxDb" id="9823-ENSSSCP00000022175"/>
<dbReference type="PeptideAtlas" id="Q9MYT8"/>
<dbReference type="Ensembl" id="ENSSSCT00000025595.4">
    <property type="protein sequence ID" value="ENSSSCP00000022175.3"/>
    <property type="gene ID" value="ENSSSCG00000023903.4"/>
</dbReference>
<dbReference type="Ensembl" id="ENSSSCT00015005570.1">
    <property type="protein sequence ID" value="ENSSSCP00015002222.1"/>
    <property type="gene ID" value="ENSSSCG00015004194.1"/>
</dbReference>
<dbReference type="Ensembl" id="ENSSSCT00025063133.1">
    <property type="protein sequence ID" value="ENSSSCP00025026879.1"/>
    <property type="gene ID" value="ENSSSCG00025046462.1"/>
</dbReference>
<dbReference type="Ensembl" id="ENSSSCT00030102676.1">
    <property type="protein sequence ID" value="ENSSSCP00030047368.1"/>
    <property type="gene ID" value="ENSSSCG00030073323.1"/>
</dbReference>
<dbReference type="Ensembl" id="ENSSSCT00035096268.1">
    <property type="protein sequence ID" value="ENSSSCP00035040503.1"/>
    <property type="gene ID" value="ENSSSCG00035071243.1"/>
</dbReference>
<dbReference type="Ensembl" id="ENSSSCT00045022033.1">
    <property type="protein sequence ID" value="ENSSSCP00045015180.1"/>
    <property type="gene ID" value="ENSSSCG00045012935.1"/>
</dbReference>
<dbReference type="Ensembl" id="ENSSSCT00050002950.1">
    <property type="protein sequence ID" value="ENSSSCP00050000959.1"/>
    <property type="gene ID" value="ENSSSCG00050002355.1"/>
</dbReference>
<dbReference type="Ensembl" id="ENSSSCT00055017469.1">
    <property type="protein sequence ID" value="ENSSSCP00055013813.1"/>
    <property type="gene ID" value="ENSSSCG00055008930.1"/>
</dbReference>
<dbReference type="Ensembl" id="ENSSSCT00060035343.1">
    <property type="protein sequence ID" value="ENSSSCP00060015074.1"/>
    <property type="gene ID" value="ENSSSCG00060026086.1"/>
</dbReference>
<dbReference type="Ensembl" id="ENSSSCT00065086348.1">
    <property type="protein sequence ID" value="ENSSSCP00065037753.1"/>
    <property type="gene ID" value="ENSSSCG00065062948.1"/>
</dbReference>
<dbReference type="Ensembl" id="ENSSSCT00070012708.1">
    <property type="protein sequence ID" value="ENSSSCP00070010455.1"/>
    <property type="gene ID" value="ENSSSCG00070006634.1"/>
</dbReference>
<dbReference type="Ensembl" id="ENSSSCT00115007184">
    <property type="protein sequence ID" value="ENSSSCP00115006744"/>
    <property type="gene ID" value="ENSSSCG00115004163"/>
</dbReference>
<dbReference type="GeneID" id="396950"/>
<dbReference type="KEGG" id="ssc:396950"/>
<dbReference type="CTD" id="521"/>
<dbReference type="VGNC" id="VGNC:85658">
    <property type="gene designation" value="ATP5ME"/>
</dbReference>
<dbReference type="eggNOG" id="KOG4326">
    <property type="taxonomic scope" value="Eukaryota"/>
</dbReference>
<dbReference type="GeneTree" id="ENSGT00390000005102"/>
<dbReference type="HOGENOM" id="CLU_180903_0_0_1"/>
<dbReference type="InParanoid" id="Q9MYT8"/>
<dbReference type="OMA" id="CWRIFET"/>
<dbReference type="OrthoDB" id="9982108at2759"/>
<dbReference type="TreeFam" id="TF314719"/>
<dbReference type="Reactome" id="R-SSC-163210">
    <property type="pathway name" value="Formation of ATP by chemiosmotic coupling"/>
</dbReference>
<dbReference type="Reactome" id="R-SSC-8949613">
    <property type="pathway name" value="Cristae formation"/>
</dbReference>
<dbReference type="Proteomes" id="UP000008227">
    <property type="component" value="Chromosome 8"/>
</dbReference>
<dbReference type="Proteomes" id="UP000314985">
    <property type="component" value="Chromosome 8"/>
</dbReference>
<dbReference type="Proteomes" id="UP000694570">
    <property type="component" value="Unplaced"/>
</dbReference>
<dbReference type="Proteomes" id="UP000694571">
    <property type="component" value="Unplaced"/>
</dbReference>
<dbReference type="Proteomes" id="UP000694720">
    <property type="component" value="Unplaced"/>
</dbReference>
<dbReference type="Proteomes" id="UP000694722">
    <property type="component" value="Unplaced"/>
</dbReference>
<dbReference type="Proteomes" id="UP000694723">
    <property type="component" value="Unplaced"/>
</dbReference>
<dbReference type="Proteomes" id="UP000694724">
    <property type="component" value="Unplaced"/>
</dbReference>
<dbReference type="Proteomes" id="UP000694725">
    <property type="component" value="Unplaced"/>
</dbReference>
<dbReference type="Proteomes" id="UP000694726">
    <property type="component" value="Unplaced"/>
</dbReference>
<dbReference type="Proteomes" id="UP000694727">
    <property type="component" value="Unplaced"/>
</dbReference>
<dbReference type="Proteomes" id="UP000694728">
    <property type="component" value="Unplaced"/>
</dbReference>
<dbReference type="GO" id="GO:0005743">
    <property type="term" value="C:mitochondrial inner membrane"/>
    <property type="evidence" value="ECO:0007669"/>
    <property type="project" value="UniProtKB-SubCell"/>
</dbReference>
<dbReference type="GO" id="GO:0045259">
    <property type="term" value="C:proton-transporting ATP synthase complex"/>
    <property type="evidence" value="ECO:0000250"/>
    <property type="project" value="UniProtKB"/>
</dbReference>
<dbReference type="GO" id="GO:0046933">
    <property type="term" value="F:proton-transporting ATP synthase activity, rotational mechanism"/>
    <property type="evidence" value="ECO:0007669"/>
    <property type="project" value="Ensembl"/>
</dbReference>
<dbReference type="GO" id="GO:0042776">
    <property type="term" value="P:proton motive force-driven mitochondrial ATP synthesis"/>
    <property type="evidence" value="ECO:0007669"/>
    <property type="project" value="Ensembl"/>
</dbReference>
<dbReference type="InterPro" id="IPR008386">
    <property type="entry name" value="ATP_synth_F0_esu_mt"/>
</dbReference>
<dbReference type="PANTHER" id="PTHR12427">
    <property type="entry name" value="ATP SYNTHASE E CHAIN, MITOCHONDRIAL"/>
    <property type="match status" value="1"/>
</dbReference>
<dbReference type="PANTHER" id="PTHR12427:SF1">
    <property type="entry name" value="ATP SYNTHASE SUBUNIT E, MITOCHONDRIAL"/>
    <property type="match status" value="1"/>
</dbReference>
<dbReference type="Pfam" id="PF05680">
    <property type="entry name" value="ATP-synt_E"/>
    <property type="match status" value="1"/>
</dbReference>
<name>ATP5I_PIG</name>
<comment type="function">
    <text evidence="1 3">Subunit e, of the mitochondrial membrane ATP synthase complex (F(1)F(0) ATP synthase or Complex V) that produces ATP from ADP in the presence of a proton gradient across the membrane which is generated by electron transport complexes of the respiratory chain. ATP synthase complex consist of a soluble F(1) head domain - the catalytic core - and a membrane F(1) domain - the membrane proton channel. These two domains are linked by a central stalk rotating inside the F(1) region and a stationary peripheral stalk. During catalysis, ATP synthesis in the catalytic domain of F(1) is coupled via a rotary mechanism of the central stalk subunits to proton translocation (By similarity). In vivo, can only synthesize ATP although its ATP hydrolase activity can be activated artificially in vitro (By similarity). Part of the complex F(0) domain (By similarity).</text>
</comment>
<comment type="subunit">
    <text evidence="3">Component of the ATP synthase complex composed at least of ATP5F1A/subunit alpha, ATP5F1B/subunit beta, ATP5MC1/subunit c (homooctomer), MT-ATP6/subunit a, MT-ATP8/subunit 8, ATP5ME/subunit e, ATP5MF/subunit f, ATP5MG/subunit g, ATP5MK/subunit k, ATP5MJ/subunit j, ATP5F1C/subunit gamma, ATP5F1D/subunit delta, ATP5F1E/subunit epsilon, ATP5PF/subunit F6, ATP5PB/subunit b, ATP5PD/subunit d, ATP5PO/subunit OSCP. ATP synthase complex consists of a soluble F(1) head domain (subunits alpha(3) and beta(3)) - the catalytic core - and a membrane F(0) domain - the membrane proton channel (subunits c, a, 8, e, f, g, k and j). These two domains are linked by a central stalk (subunits gamma, delta, and epsilon) rotating inside the F1 region and a stationary peripheral stalk (subunits F6, b, d, and OSCP).</text>
</comment>
<comment type="subcellular location">
    <subcellularLocation>
        <location>Mitochondrion</location>
    </subcellularLocation>
    <subcellularLocation>
        <location>Mitochondrion inner membrane</location>
    </subcellularLocation>
</comment>
<comment type="similarity">
    <text evidence="5">Belongs to the ATPase e subunit family.</text>
</comment>
<accession>Q9MYT8</accession>
<accession>A1XQR5</accession>
<protein>
    <recommendedName>
        <fullName evidence="3">ATP synthase F(0) complex subunit e, mitochondrial</fullName>
        <shortName>ATPase subunit e</shortName>
    </recommendedName>
    <alternativeName>
        <fullName evidence="5">ATP synthase membrane subunit e</fullName>
    </alternativeName>
</protein>
<sequence>MVPPVQVSPLIKLGRYSALFLGVAYGAKRYNYLKPRAEEERRIAAEEKKKQDELKRIERELAEAQEDSILK</sequence>
<feature type="chain" id="PRO_0000071686" description="ATP synthase F(0) complex subunit e, mitochondrial">
    <location>
        <begin position="1"/>
        <end position="71"/>
    </location>
</feature>
<feature type="modified residue" description="N6-acetyllysine" evidence="4">
    <location>
        <position position="34"/>
    </location>
</feature>
<feature type="modified residue" description="Phosphoserine" evidence="2">
    <location>
        <position position="68"/>
    </location>
</feature>
<feature type="sequence conflict" description="In Ref. 2; ABK55621." evidence="5" ref="2">
    <original>S</original>
    <variation>F</variation>
    <location>
        <position position="8"/>
    </location>
</feature>
<feature type="sequence conflict" description="In Ref. 1; CAB94728." evidence="5" ref="1">
    <original>I</original>
    <variation>T</variation>
    <location>
        <position position="69"/>
    </location>
</feature>
<proteinExistence type="evidence at protein level"/>
<evidence type="ECO:0000250" key="1">
    <source>
        <dbReference type="UniProtKB" id="P19483"/>
    </source>
</evidence>
<evidence type="ECO:0000250" key="2">
    <source>
        <dbReference type="UniProtKB" id="P29419"/>
    </source>
</evidence>
<evidence type="ECO:0000250" key="3">
    <source>
        <dbReference type="UniProtKB" id="P56385"/>
    </source>
</evidence>
<evidence type="ECO:0000250" key="4">
    <source>
        <dbReference type="UniProtKB" id="Q06185"/>
    </source>
</evidence>
<evidence type="ECO:0000305" key="5"/>
<keyword id="KW-0002">3D-structure</keyword>
<keyword id="KW-0007">Acetylation</keyword>
<keyword id="KW-0066">ATP synthesis</keyword>
<keyword id="KW-0138">CF(0)</keyword>
<keyword id="KW-0375">Hydrogen ion transport</keyword>
<keyword id="KW-0406">Ion transport</keyword>
<keyword id="KW-0472">Membrane</keyword>
<keyword id="KW-0496">Mitochondrion</keyword>
<keyword id="KW-0999">Mitochondrion inner membrane</keyword>
<keyword id="KW-0597">Phosphoprotein</keyword>
<keyword id="KW-1185">Reference proteome</keyword>
<keyword id="KW-0813">Transport</keyword>
<gene>
    <name evidence="3" type="primary">ATP5ME</name>
    <name type="synonym">ATP5I</name>
</gene>
<reference key="1">
    <citation type="submission" date="2000-06" db="EMBL/GenBank/DDBJ databases">
        <title>Porcine ESTs differentially expressed in healthy piglets and piglets suffering from congenital splay leg syndrome.</title>
        <authorList>
            <person name="Maak S."/>
            <person name="Jaesert S."/>
            <person name="von Lengerken G."/>
        </authorList>
    </citation>
    <scope>NUCLEOTIDE SEQUENCE [MRNA]</scope>
    <source>
        <tissue>Skeletal muscle</tissue>
    </source>
</reference>
<reference key="2">
    <citation type="submission" date="2006-05" db="EMBL/GenBank/DDBJ databases">
        <title>Generation and analysis of cDNA sequences derived from a porcine skeletal muscle library.</title>
        <authorList>
            <person name="Cai G."/>
            <person name="Chen Y."/>
            <person name="Wang C."/>
            <person name="Li J."/>
            <person name="Peng G."/>
            <person name="Zhang H."/>
        </authorList>
    </citation>
    <scope>NUCLEOTIDE SEQUENCE [LARGE SCALE MRNA]</scope>
    <source>
        <tissue>Longissimus dorsi muscle</tissue>
    </source>
</reference>